<gene>
    <name evidence="1" type="primary">surE</name>
    <name type="ordered locus">R01533</name>
    <name type="ORF">SMc02063</name>
</gene>
<feature type="chain" id="PRO_0000111836" description="5'-nucleotidase SurE">
    <location>
        <begin position="1"/>
        <end position="256"/>
    </location>
</feature>
<feature type="binding site" evidence="1">
    <location>
        <position position="8"/>
    </location>
    <ligand>
        <name>a divalent metal cation</name>
        <dbReference type="ChEBI" id="CHEBI:60240"/>
    </ligand>
</feature>
<feature type="binding site" evidence="1">
    <location>
        <position position="9"/>
    </location>
    <ligand>
        <name>a divalent metal cation</name>
        <dbReference type="ChEBI" id="CHEBI:60240"/>
    </ligand>
</feature>
<feature type="binding site" evidence="1">
    <location>
        <position position="40"/>
    </location>
    <ligand>
        <name>a divalent metal cation</name>
        <dbReference type="ChEBI" id="CHEBI:60240"/>
    </ligand>
</feature>
<feature type="binding site" evidence="1">
    <location>
        <position position="92"/>
    </location>
    <ligand>
        <name>a divalent metal cation</name>
        <dbReference type="ChEBI" id="CHEBI:60240"/>
    </ligand>
</feature>
<feature type="sequence conflict" description="In Ref. 1; AAB88074." evidence="2" ref="1">
    <original>L</original>
    <variation>F</variation>
    <location>
        <position position="147"/>
    </location>
</feature>
<reference key="1">
    <citation type="journal article" date="1997" name="Mol. Plant Microbe Interact.">
        <title>A biotin-regulated locus, bioS, in a possible survival operon of Rhizobium meliloti.</title>
        <authorList>
            <person name="Streit W.R."/>
            <person name="Phillips D.A."/>
        </authorList>
    </citation>
    <scope>NUCLEOTIDE SEQUENCE [GENOMIC DNA]</scope>
    <source>
        <strain>1021</strain>
    </source>
</reference>
<reference key="2">
    <citation type="journal article" date="2001" name="Proc. Natl. Acad. Sci. U.S.A.">
        <title>Analysis of the chromosome sequence of the legume symbiont Sinorhizobium meliloti strain 1021.</title>
        <authorList>
            <person name="Capela D."/>
            <person name="Barloy-Hubler F."/>
            <person name="Gouzy J."/>
            <person name="Bothe G."/>
            <person name="Ampe F."/>
            <person name="Batut J."/>
            <person name="Boistard P."/>
            <person name="Becker A."/>
            <person name="Boutry M."/>
            <person name="Cadieu E."/>
            <person name="Dreano S."/>
            <person name="Gloux S."/>
            <person name="Godrie T."/>
            <person name="Goffeau A."/>
            <person name="Kahn D."/>
            <person name="Kiss E."/>
            <person name="Lelaure V."/>
            <person name="Masuy D."/>
            <person name="Pohl T."/>
            <person name="Portetelle D."/>
            <person name="Puehler A."/>
            <person name="Purnelle B."/>
            <person name="Ramsperger U."/>
            <person name="Renard C."/>
            <person name="Thebault P."/>
            <person name="Vandenbol M."/>
            <person name="Weidner S."/>
            <person name="Galibert F."/>
        </authorList>
    </citation>
    <scope>NUCLEOTIDE SEQUENCE [LARGE SCALE GENOMIC DNA]</scope>
    <source>
        <strain>1021</strain>
    </source>
</reference>
<reference key="3">
    <citation type="journal article" date="2001" name="Science">
        <title>The composite genome of the legume symbiont Sinorhizobium meliloti.</title>
        <authorList>
            <person name="Galibert F."/>
            <person name="Finan T.M."/>
            <person name="Long S.R."/>
            <person name="Puehler A."/>
            <person name="Abola P."/>
            <person name="Ampe F."/>
            <person name="Barloy-Hubler F."/>
            <person name="Barnett M.J."/>
            <person name="Becker A."/>
            <person name="Boistard P."/>
            <person name="Bothe G."/>
            <person name="Boutry M."/>
            <person name="Bowser L."/>
            <person name="Buhrmester J."/>
            <person name="Cadieu E."/>
            <person name="Capela D."/>
            <person name="Chain P."/>
            <person name="Cowie A."/>
            <person name="Davis R.W."/>
            <person name="Dreano S."/>
            <person name="Federspiel N.A."/>
            <person name="Fisher R.F."/>
            <person name="Gloux S."/>
            <person name="Godrie T."/>
            <person name="Goffeau A."/>
            <person name="Golding B."/>
            <person name="Gouzy J."/>
            <person name="Gurjal M."/>
            <person name="Hernandez-Lucas I."/>
            <person name="Hong A."/>
            <person name="Huizar L."/>
            <person name="Hyman R.W."/>
            <person name="Jones T."/>
            <person name="Kahn D."/>
            <person name="Kahn M.L."/>
            <person name="Kalman S."/>
            <person name="Keating D.H."/>
            <person name="Kiss E."/>
            <person name="Komp C."/>
            <person name="Lelaure V."/>
            <person name="Masuy D."/>
            <person name="Palm C."/>
            <person name="Peck M.C."/>
            <person name="Pohl T.M."/>
            <person name="Portetelle D."/>
            <person name="Purnelle B."/>
            <person name="Ramsperger U."/>
            <person name="Surzycki R."/>
            <person name="Thebault P."/>
            <person name="Vandenbol M."/>
            <person name="Vorhoelter F.J."/>
            <person name="Weidner S."/>
            <person name="Wells D.H."/>
            <person name="Wong K."/>
            <person name="Yeh K.-C."/>
            <person name="Batut J."/>
        </authorList>
    </citation>
    <scope>NUCLEOTIDE SEQUENCE [LARGE SCALE GENOMIC DNA]</scope>
    <source>
        <strain>1021</strain>
    </source>
</reference>
<evidence type="ECO:0000255" key="1">
    <source>
        <dbReference type="HAMAP-Rule" id="MF_00060"/>
    </source>
</evidence>
<evidence type="ECO:0000305" key="2"/>
<organism>
    <name type="scientific">Rhizobium meliloti (strain 1021)</name>
    <name type="common">Ensifer meliloti</name>
    <name type="synonym">Sinorhizobium meliloti</name>
    <dbReference type="NCBI Taxonomy" id="266834"/>
    <lineage>
        <taxon>Bacteria</taxon>
        <taxon>Pseudomonadati</taxon>
        <taxon>Pseudomonadota</taxon>
        <taxon>Alphaproteobacteria</taxon>
        <taxon>Hyphomicrobiales</taxon>
        <taxon>Rhizobiaceae</taxon>
        <taxon>Sinorhizobium/Ensifer group</taxon>
        <taxon>Sinorhizobium</taxon>
    </lineage>
</organism>
<dbReference type="EC" id="3.1.3.5" evidence="1"/>
<dbReference type="EMBL" id="U81296">
    <property type="protein sequence ID" value="AAB88074.1"/>
    <property type="molecule type" value="Genomic_DNA"/>
</dbReference>
<dbReference type="EMBL" id="AL591688">
    <property type="protein sequence ID" value="CAC46112.1"/>
    <property type="molecule type" value="Genomic_DNA"/>
</dbReference>
<dbReference type="RefSeq" id="NP_385639.1">
    <property type="nucleotide sequence ID" value="NC_003047.1"/>
</dbReference>
<dbReference type="RefSeq" id="WP_010969283.1">
    <property type="nucleotide sequence ID" value="NC_003047.1"/>
</dbReference>
<dbReference type="SMR" id="O08248"/>
<dbReference type="EnsemblBacteria" id="CAC46112">
    <property type="protein sequence ID" value="CAC46112"/>
    <property type="gene ID" value="SMc02063"/>
</dbReference>
<dbReference type="GeneID" id="89575858"/>
<dbReference type="KEGG" id="sme:SMc02063"/>
<dbReference type="PATRIC" id="fig|266834.11.peg.2956"/>
<dbReference type="eggNOG" id="COG0496">
    <property type="taxonomic scope" value="Bacteria"/>
</dbReference>
<dbReference type="HOGENOM" id="CLU_045192_1_2_5"/>
<dbReference type="OrthoDB" id="9780815at2"/>
<dbReference type="Proteomes" id="UP000001976">
    <property type="component" value="Chromosome"/>
</dbReference>
<dbReference type="GO" id="GO:0005737">
    <property type="term" value="C:cytoplasm"/>
    <property type="evidence" value="ECO:0007669"/>
    <property type="project" value="UniProtKB-SubCell"/>
</dbReference>
<dbReference type="GO" id="GO:0008254">
    <property type="term" value="F:3'-nucleotidase activity"/>
    <property type="evidence" value="ECO:0007669"/>
    <property type="project" value="TreeGrafter"/>
</dbReference>
<dbReference type="GO" id="GO:0008253">
    <property type="term" value="F:5'-nucleotidase activity"/>
    <property type="evidence" value="ECO:0007669"/>
    <property type="project" value="UniProtKB-UniRule"/>
</dbReference>
<dbReference type="GO" id="GO:0004309">
    <property type="term" value="F:exopolyphosphatase activity"/>
    <property type="evidence" value="ECO:0007669"/>
    <property type="project" value="TreeGrafter"/>
</dbReference>
<dbReference type="GO" id="GO:0046872">
    <property type="term" value="F:metal ion binding"/>
    <property type="evidence" value="ECO:0007669"/>
    <property type="project" value="UniProtKB-UniRule"/>
</dbReference>
<dbReference type="GO" id="GO:0000166">
    <property type="term" value="F:nucleotide binding"/>
    <property type="evidence" value="ECO:0007669"/>
    <property type="project" value="UniProtKB-KW"/>
</dbReference>
<dbReference type="FunFam" id="3.40.1210.10:FF:000001">
    <property type="entry name" value="5'/3'-nucleotidase SurE"/>
    <property type="match status" value="1"/>
</dbReference>
<dbReference type="Gene3D" id="3.40.1210.10">
    <property type="entry name" value="Survival protein SurE-like phosphatase/nucleotidase"/>
    <property type="match status" value="1"/>
</dbReference>
<dbReference type="HAMAP" id="MF_00060">
    <property type="entry name" value="SurE"/>
    <property type="match status" value="1"/>
</dbReference>
<dbReference type="InterPro" id="IPR030048">
    <property type="entry name" value="SurE"/>
</dbReference>
<dbReference type="InterPro" id="IPR002828">
    <property type="entry name" value="SurE-like_Pase/nucleotidase"/>
</dbReference>
<dbReference type="InterPro" id="IPR036523">
    <property type="entry name" value="SurE-like_sf"/>
</dbReference>
<dbReference type="NCBIfam" id="NF001490">
    <property type="entry name" value="PRK00346.1-4"/>
    <property type="match status" value="1"/>
</dbReference>
<dbReference type="NCBIfam" id="TIGR00087">
    <property type="entry name" value="surE"/>
    <property type="match status" value="1"/>
</dbReference>
<dbReference type="PANTHER" id="PTHR30457">
    <property type="entry name" value="5'-NUCLEOTIDASE SURE"/>
    <property type="match status" value="1"/>
</dbReference>
<dbReference type="PANTHER" id="PTHR30457:SF12">
    <property type="entry name" value="5'_3'-NUCLEOTIDASE SURE"/>
    <property type="match status" value="1"/>
</dbReference>
<dbReference type="Pfam" id="PF01975">
    <property type="entry name" value="SurE"/>
    <property type="match status" value="1"/>
</dbReference>
<dbReference type="SUPFAM" id="SSF64167">
    <property type="entry name" value="SurE-like"/>
    <property type="match status" value="1"/>
</dbReference>
<name>SURE_RHIME</name>
<proteinExistence type="inferred from homology"/>
<protein>
    <recommendedName>
        <fullName evidence="1">5'-nucleotidase SurE</fullName>
        <ecNumber evidence="1">3.1.3.5</ecNumber>
    </recommendedName>
    <alternativeName>
        <fullName evidence="1">Nucleoside 5'-monophosphate phosphohydrolase</fullName>
    </alternativeName>
</protein>
<accession>O08248</accession>
<sequence length="256" mass="27737">MRILLTNDDGIHAEGLSVLERIARTISDDVWVVAPEVDQSGLAHSLTLSEPLRLRPVSERRFALRGTPTDCVIMAVKKILDRKPDLVLSGVNVGANLADDVTYSGTVAGAIEGTLQGIRSIALSQAYQHAVGRDVPWDVAETHAPALIRTLMGVDLPDGTLINLNFPNCAVDAVAGVEVTSQGKLEFGLSIDERTDGRGFPYFWLRFGERAGDFRSGTDIRALRDNRISVTPLKLDMTDHAAQERIAQALREGSVA</sequence>
<keyword id="KW-0963">Cytoplasm</keyword>
<keyword id="KW-0378">Hydrolase</keyword>
<keyword id="KW-0479">Metal-binding</keyword>
<keyword id="KW-0547">Nucleotide-binding</keyword>
<keyword id="KW-1185">Reference proteome</keyword>
<comment type="function">
    <text evidence="1">Nucleotidase that shows phosphatase activity on nucleoside 5'-monophosphates.</text>
</comment>
<comment type="catalytic activity">
    <reaction evidence="1">
        <text>a ribonucleoside 5'-phosphate + H2O = a ribonucleoside + phosphate</text>
        <dbReference type="Rhea" id="RHEA:12484"/>
        <dbReference type="ChEBI" id="CHEBI:15377"/>
        <dbReference type="ChEBI" id="CHEBI:18254"/>
        <dbReference type="ChEBI" id="CHEBI:43474"/>
        <dbReference type="ChEBI" id="CHEBI:58043"/>
        <dbReference type="EC" id="3.1.3.5"/>
    </reaction>
</comment>
<comment type="cofactor">
    <cofactor evidence="1">
        <name>a divalent metal cation</name>
        <dbReference type="ChEBI" id="CHEBI:60240"/>
    </cofactor>
    <text evidence="1">Binds 1 divalent metal cation per subunit.</text>
</comment>
<comment type="subcellular location">
    <subcellularLocation>
        <location evidence="1">Cytoplasm</location>
    </subcellularLocation>
</comment>
<comment type="similarity">
    <text evidence="1">Belongs to the SurE nucleotidase family.</text>
</comment>